<reference key="1">
    <citation type="journal article" date="1998" name="Proc. Natl. Acad. Sci. U.S.A.">
        <title>Tracking molecular evolution of photosynthesis by characterization of a major photosynthesis gene cluster from Heliobacillus mobilis.</title>
        <authorList>
            <person name="Xiong J."/>
            <person name="Inoue K."/>
            <person name="Bauer C.E."/>
        </authorList>
    </citation>
    <scope>NUCLEOTIDE SEQUENCE [GENOMIC DNA]</scope>
</reference>
<accession>Q9ZGE9</accession>
<dbReference type="EC" id="1.3.7.7" evidence="1"/>
<dbReference type="EMBL" id="AF080002">
    <property type="protein sequence ID" value="AAC84029.1"/>
    <property type="molecule type" value="Genomic_DNA"/>
</dbReference>
<dbReference type="PIR" id="T31458">
    <property type="entry name" value="T31458"/>
</dbReference>
<dbReference type="RefSeq" id="WP_155475594.1">
    <property type="nucleotide sequence ID" value="NZ_WNKU01000004.1"/>
</dbReference>
<dbReference type="SMR" id="Q9ZGE9"/>
<dbReference type="OrthoDB" id="495776at2"/>
<dbReference type="UniPathway" id="UPA00671"/>
<dbReference type="GO" id="GO:0051539">
    <property type="term" value="F:4 iron, 4 sulfur cluster binding"/>
    <property type="evidence" value="ECO:0007669"/>
    <property type="project" value="UniProtKB-UniRule"/>
</dbReference>
<dbReference type="GO" id="GO:0005524">
    <property type="term" value="F:ATP binding"/>
    <property type="evidence" value="ECO:0007669"/>
    <property type="project" value="UniProtKB-UniRule"/>
</dbReference>
<dbReference type="GO" id="GO:0046872">
    <property type="term" value="F:metal ion binding"/>
    <property type="evidence" value="ECO:0007669"/>
    <property type="project" value="UniProtKB-KW"/>
</dbReference>
<dbReference type="GO" id="GO:0016730">
    <property type="term" value="F:oxidoreductase activity, acting on iron-sulfur proteins as donors"/>
    <property type="evidence" value="ECO:0007669"/>
    <property type="project" value="InterPro"/>
</dbReference>
<dbReference type="GO" id="GO:0016636">
    <property type="term" value="F:oxidoreductase activity, acting on the CH-CH group of donors, iron-sulfur protein as acceptor"/>
    <property type="evidence" value="ECO:0007669"/>
    <property type="project" value="UniProtKB-UniRule"/>
</dbReference>
<dbReference type="GO" id="GO:0036070">
    <property type="term" value="P:light-independent bacteriochlorophyll biosynthetic process"/>
    <property type="evidence" value="ECO:0007669"/>
    <property type="project" value="UniProtKB-UniRule"/>
</dbReference>
<dbReference type="GO" id="GO:0019685">
    <property type="term" value="P:photosynthesis, dark reaction"/>
    <property type="evidence" value="ECO:0007669"/>
    <property type="project" value="InterPro"/>
</dbReference>
<dbReference type="CDD" id="cd01979">
    <property type="entry name" value="Pchlide_reductase_N"/>
    <property type="match status" value="1"/>
</dbReference>
<dbReference type="Gene3D" id="3.40.50.1980">
    <property type="entry name" value="Nitrogenase molybdenum iron protein domain"/>
    <property type="match status" value="3"/>
</dbReference>
<dbReference type="HAMAP" id="MF_00352">
    <property type="entry name" value="ChlN_BchN"/>
    <property type="match status" value="1"/>
</dbReference>
<dbReference type="InterPro" id="IPR050293">
    <property type="entry name" value="LIPOR_BchN/ChlN"/>
</dbReference>
<dbReference type="InterPro" id="IPR000510">
    <property type="entry name" value="Nase/OxRdtase_comp1"/>
</dbReference>
<dbReference type="InterPro" id="IPR005970">
    <property type="entry name" value="Protochl_reductN"/>
</dbReference>
<dbReference type="NCBIfam" id="TIGR01279">
    <property type="entry name" value="DPOR_bchN"/>
    <property type="match status" value="1"/>
</dbReference>
<dbReference type="NCBIfam" id="NF002768">
    <property type="entry name" value="PRK02842.1"/>
    <property type="match status" value="1"/>
</dbReference>
<dbReference type="PANTHER" id="PTHR39429">
    <property type="entry name" value="LIGHT-INDEPENDENT PROTOCHLOROPHYLLIDE REDUCTASE SUBUNIT N"/>
    <property type="match status" value="1"/>
</dbReference>
<dbReference type="PANTHER" id="PTHR39429:SF3">
    <property type="entry name" value="LIGHT-INDEPENDENT PROTOCHLOROPHYLLIDE REDUCTASE SUBUNIT N"/>
    <property type="match status" value="1"/>
</dbReference>
<dbReference type="Pfam" id="PF00148">
    <property type="entry name" value="Oxidored_nitro"/>
    <property type="match status" value="1"/>
</dbReference>
<dbReference type="PIRSF" id="PIRSF000162">
    <property type="entry name" value="P_chlorophyll_rd"/>
    <property type="match status" value="1"/>
</dbReference>
<dbReference type="SUPFAM" id="SSF53807">
    <property type="entry name" value="Helical backbone' metal receptor"/>
    <property type="match status" value="1"/>
</dbReference>
<keyword id="KW-0004">4Fe-4S</keyword>
<keyword id="KW-0067">ATP-binding</keyword>
<keyword id="KW-0077">Bacteriochlorophyll biosynthesis</keyword>
<keyword id="KW-0149">Chlorophyll biosynthesis</keyword>
<keyword id="KW-0408">Iron</keyword>
<keyword id="KW-0411">Iron-sulfur</keyword>
<keyword id="KW-0479">Metal-binding</keyword>
<keyword id="KW-0547">Nucleotide-binding</keyword>
<keyword id="KW-0560">Oxidoreductase</keyword>
<keyword id="KW-0602">Photosynthesis</keyword>
<name>BCHN_HELMO</name>
<sequence>MERVERENGCFHTFCPIASVAWLHRKIKDSFFLIVGTHTCAHFIQTALDVMVYAHSRFGFAVLEESDLVSASPTEELGKVVQQVVDEWHPKVIFVLSTCSVDILKMDLEVSCKDLSTRFGFPVLPASTSGIDRSFTQGEDAVLHALLPFVPKEAPAVEPVEEKKPRWFSFGKESEKEKAEPARNLVLIGAVTDSTIQQLQWELKQLGLPKVDVFPDGDIRKMPVINEQTVVVPLQPYLNDTLATIRRERRAKVLSTVFPIGPDGTARFLEAICLEFGLDTSRIKEKEAQAWRDLEPQLQILRGKKIMFLGDNLLELPLARFLTSCDVQVVEAGTPYIHSKDLQQELELLKERDVRIVESPDFTKQLQRMQEYKPDLVVAGLGICNPLEAMGFTTAWSIEFTFAQIHGFVNAIDLIKLFTKPLLKRQALMEHGWAEAGWLE</sequence>
<feature type="chain" id="PRO_0000208595" description="Light-independent protochlorophyllide reductase subunit N">
    <location>
        <begin position="1"/>
        <end position="440"/>
    </location>
</feature>
<feature type="binding site" evidence="1">
    <location>
        <position position="15"/>
    </location>
    <ligand>
        <name>[4Fe-4S] cluster</name>
        <dbReference type="ChEBI" id="CHEBI:49883"/>
        <note>ligand shared with heterodimeric partner</note>
    </ligand>
</feature>
<feature type="binding site" evidence="1">
    <location>
        <position position="40"/>
    </location>
    <ligand>
        <name>[4Fe-4S] cluster</name>
        <dbReference type="ChEBI" id="CHEBI:49883"/>
        <note>ligand shared with heterodimeric partner</note>
    </ligand>
</feature>
<feature type="binding site" evidence="1">
    <location>
        <position position="99"/>
    </location>
    <ligand>
        <name>[4Fe-4S] cluster</name>
        <dbReference type="ChEBI" id="CHEBI:49883"/>
        <note>ligand shared with heterodimeric partner</note>
    </ligand>
</feature>
<evidence type="ECO:0000255" key="1">
    <source>
        <dbReference type="HAMAP-Rule" id="MF_00352"/>
    </source>
</evidence>
<organism>
    <name type="scientific">Heliobacterium mobile</name>
    <name type="common">Heliobacillus mobilis</name>
    <dbReference type="NCBI Taxonomy" id="28064"/>
    <lineage>
        <taxon>Bacteria</taxon>
        <taxon>Bacillati</taxon>
        <taxon>Bacillota</taxon>
        <taxon>Clostridia</taxon>
        <taxon>Eubacteriales</taxon>
        <taxon>Heliobacteriaceae</taxon>
        <taxon>Heliobacterium</taxon>
    </lineage>
</organism>
<comment type="function">
    <text evidence="1">Component of the dark-operative protochlorophyllide reductase (DPOR) that uses Mg-ATP and reduced ferredoxin to reduce ring D of protochlorophyllide (Pchlide) to form chlorophyllide a (Chlide). This reaction is light-independent. The NB-protein (BchN-BchB) is the catalytic component of the complex.</text>
</comment>
<comment type="catalytic activity">
    <reaction evidence="1">
        <text>chlorophyllide a + oxidized 2[4Fe-4S]-[ferredoxin] + 2 ADP + 2 phosphate = protochlorophyllide a + reduced 2[4Fe-4S]-[ferredoxin] + 2 ATP + 2 H2O</text>
        <dbReference type="Rhea" id="RHEA:28202"/>
        <dbReference type="Rhea" id="RHEA-COMP:10002"/>
        <dbReference type="Rhea" id="RHEA-COMP:10004"/>
        <dbReference type="ChEBI" id="CHEBI:15377"/>
        <dbReference type="ChEBI" id="CHEBI:30616"/>
        <dbReference type="ChEBI" id="CHEBI:33722"/>
        <dbReference type="ChEBI" id="CHEBI:33723"/>
        <dbReference type="ChEBI" id="CHEBI:43474"/>
        <dbReference type="ChEBI" id="CHEBI:83348"/>
        <dbReference type="ChEBI" id="CHEBI:83350"/>
        <dbReference type="ChEBI" id="CHEBI:456216"/>
        <dbReference type="EC" id="1.3.7.7"/>
    </reaction>
</comment>
<comment type="cofactor">
    <cofactor evidence="1">
        <name>[4Fe-4S] cluster</name>
        <dbReference type="ChEBI" id="CHEBI:49883"/>
    </cofactor>
    <text evidence="1">Binds 1 [4Fe-4S] cluster per heterodimer. The cluster is bound at the heterodimer interface by residues from both subunits.</text>
</comment>
<comment type="pathway">
    <text evidence="1">Porphyrin-containing compound metabolism; bacteriochlorophyll biosynthesis (light-independent).</text>
</comment>
<comment type="subunit">
    <text evidence="1">Protochlorophyllide reductase is composed of three subunits; BchL, BchN and BchB. Forms a heterotetramer of two BchB and two BchN subunits.</text>
</comment>
<comment type="similarity">
    <text evidence="1">Belongs to the BchN/ChlN family.</text>
</comment>
<protein>
    <recommendedName>
        <fullName evidence="1">Light-independent protochlorophyllide reductase subunit N</fullName>
        <shortName evidence="1">DPOR subunit N</shortName>
        <shortName evidence="1">LI-POR subunit N</shortName>
        <ecNumber evidence="1">1.3.7.7</ecNumber>
    </recommendedName>
</protein>
<proteinExistence type="inferred from homology"/>
<gene>
    <name evidence="1" type="primary">bchN</name>
</gene>